<feature type="chain" id="PRO_1000200233" description="UPF0145 protein RSKD131_1772">
    <location>
        <begin position="1"/>
        <end position="103"/>
    </location>
</feature>
<protein>
    <recommendedName>
        <fullName evidence="1">UPF0145 protein RSKD131_1772</fullName>
    </recommendedName>
</protein>
<dbReference type="EMBL" id="CP001150">
    <property type="protein sequence ID" value="ACM01632.1"/>
    <property type="molecule type" value="Genomic_DNA"/>
</dbReference>
<dbReference type="RefSeq" id="WP_002720603.1">
    <property type="nucleotide sequence ID" value="NC_011963.1"/>
</dbReference>
<dbReference type="SMR" id="B9KKI5"/>
<dbReference type="GeneID" id="67447172"/>
<dbReference type="KEGG" id="rsk:RSKD131_1772"/>
<dbReference type="HOGENOM" id="CLU_117144_3_2_5"/>
<dbReference type="Gene3D" id="3.30.110.70">
    <property type="entry name" value="Hypothetical protein apc22750. Chain B"/>
    <property type="match status" value="1"/>
</dbReference>
<dbReference type="HAMAP" id="MF_00338">
    <property type="entry name" value="UPF0145"/>
    <property type="match status" value="1"/>
</dbReference>
<dbReference type="InterPro" id="IPR035439">
    <property type="entry name" value="UPF0145_dom_sf"/>
</dbReference>
<dbReference type="InterPro" id="IPR002765">
    <property type="entry name" value="UPF0145_YbjQ-like"/>
</dbReference>
<dbReference type="PANTHER" id="PTHR34068">
    <property type="entry name" value="UPF0145 PROTEIN YBJQ"/>
    <property type="match status" value="1"/>
</dbReference>
<dbReference type="PANTHER" id="PTHR34068:SF1">
    <property type="entry name" value="UPF0145 PROTEIN YBJQ"/>
    <property type="match status" value="1"/>
</dbReference>
<dbReference type="Pfam" id="PF01906">
    <property type="entry name" value="YbjQ_1"/>
    <property type="match status" value="1"/>
</dbReference>
<dbReference type="SUPFAM" id="SSF117782">
    <property type="entry name" value="YbjQ-like"/>
    <property type="match status" value="1"/>
</dbReference>
<comment type="similarity">
    <text evidence="1">Belongs to the UPF0145 family.</text>
</comment>
<proteinExistence type="inferred from homology"/>
<name>Y1772_CERSK</name>
<evidence type="ECO:0000255" key="1">
    <source>
        <dbReference type="HAMAP-Rule" id="MF_00338"/>
    </source>
</evidence>
<sequence length="103" mass="10794">MIVTTTPNIEGYQIATYHGIVTGEAILGANVIRDLFAGITDFIGGRSGAYEKELGRARETALSEMEEAARAKGANAVVGVDLDYEVINNMLMVSASGTAVTIA</sequence>
<organism>
    <name type="scientific">Cereibacter sphaeroides (strain KD131 / KCTC 12085)</name>
    <name type="common">Rhodobacter sphaeroides</name>
    <dbReference type="NCBI Taxonomy" id="557760"/>
    <lineage>
        <taxon>Bacteria</taxon>
        <taxon>Pseudomonadati</taxon>
        <taxon>Pseudomonadota</taxon>
        <taxon>Alphaproteobacteria</taxon>
        <taxon>Rhodobacterales</taxon>
        <taxon>Paracoccaceae</taxon>
        <taxon>Cereibacter</taxon>
    </lineage>
</organism>
<reference key="1">
    <citation type="journal article" date="2009" name="J. Bacteriol.">
        <title>Complete genome sequence of Rhodobacter sphaeroides KD131.</title>
        <authorList>
            <person name="Lim S.-K."/>
            <person name="Kim S.J."/>
            <person name="Cha S.H."/>
            <person name="Oh Y.-K."/>
            <person name="Rhee H.-J."/>
            <person name="Kim M.-S."/>
            <person name="Lee J.K."/>
        </authorList>
    </citation>
    <scope>NUCLEOTIDE SEQUENCE [LARGE SCALE GENOMIC DNA]</scope>
    <source>
        <strain>KD131 / KCTC 12085</strain>
    </source>
</reference>
<gene>
    <name type="ordered locus">RSKD131_1772</name>
</gene>
<accession>B9KKI5</accession>